<dbReference type="EMBL" id="AE017199">
    <property type="protein sequence ID" value="AAR39195.1"/>
    <property type="molecule type" value="Genomic_DNA"/>
</dbReference>
<dbReference type="SMR" id="Q74NK1"/>
<dbReference type="STRING" id="228908.NEQ346"/>
<dbReference type="EnsemblBacteria" id="AAR39195">
    <property type="protein sequence ID" value="AAR39195"/>
    <property type="gene ID" value="NEQ346"/>
</dbReference>
<dbReference type="KEGG" id="neq:NEQ346"/>
<dbReference type="PATRIC" id="fig|228908.8.peg.356"/>
<dbReference type="HOGENOM" id="CLU_177460_0_0_2"/>
<dbReference type="Proteomes" id="UP000000578">
    <property type="component" value="Chromosome"/>
</dbReference>
<dbReference type="GO" id="GO:1990904">
    <property type="term" value="C:ribonucleoprotein complex"/>
    <property type="evidence" value="ECO:0007669"/>
    <property type="project" value="UniProtKB-KW"/>
</dbReference>
<dbReference type="GO" id="GO:0005840">
    <property type="term" value="C:ribosome"/>
    <property type="evidence" value="ECO:0007669"/>
    <property type="project" value="UniProtKB-KW"/>
</dbReference>
<dbReference type="GO" id="GO:0070180">
    <property type="term" value="F:large ribosomal subunit rRNA binding"/>
    <property type="evidence" value="ECO:0007669"/>
    <property type="project" value="UniProtKB-UniRule"/>
</dbReference>
<dbReference type="GO" id="GO:0003735">
    <property type="term" value="F:structural constituent of ribosome"/>
    <property type="evidence" value="ECO:0007669"/>
    <property type="project" value="InterPro"/>
</dbReference>
<dbReference type="GO" id="GO:0006412">
    <property type="term" value="P:translation"/>
    <property type="evidence" value="ECO:0007669"/>
    <property type="project" value="UniProtKB-UniRule"/>
</dbReference>
<dbReference type="Gene3D" id="3.10.20.10">
    <property type="match status" value="1"/>
</dbReference>
<dbReference type="HAMAP" id="MF_00273">
    <property type="entry name" value="Ribosomal_eL20"/>
    <property type="match status" value="1"/>
</dbReference>
<dbReference type="InterPro" id="IPR028877">
    <property type="entry name" value="Ribosomal_eL20"/>
</dbReference>
<dbReference type="InterPro" id="IPR023573">
    <property type="entry name" value="Ribosomal_eL20_dom"/>
</dbReference>
<dbReference type="NCBIfam" id="NF001981">
    <property type="entry name" value="PRK00773.1-1"/>
    <property type="match status" value="1"/>
</dbReference>
<dbReference type="Pfam" id="PF01775">
    <property type="entry name" value="Ribosomal_L18A"/>
    <property type="match status" value="1"/>
</dbReference>
<dbReference type="SUPFAM" id="SSF160374">
    <property type="entry name" value="RplX-like"/>
    <property type="match status" value="1"/>
</dbReference>
<accession>Q74NK1</accession>
<comment type="subunit">
    <text evidence="1">Part of the 50S ribosomal subunit. Binds 23S rRNA.</text>
</comment>
<comment type="similarity">
    <text evidence="1">Belongs to the eukaryotic ribosomal protein eL20 family.</text>
</comment>
<organism>
    <name type="scientific">Nanoarchaeum equitans (strain Kin4-M)</name>
    <dbReference type="NCBI Taxonomy" id="228908"/>
    <lineage>
        <taxon>Archaea</taxon>
        <taxon>Nanobdellota</taxon>
        <taxon>Candidatus Nanoarchaeia</taxon>
        <taxon>Nanoarchaeales</taxon>
        <taxon>Nanoarchaeaceae</taxon>
        <taxon>Nanoarchaeum</taxon>
    </lineage>
</organism>
<feature type="chain" id="PRO_0000153703" description="Large ribosomal subunit protein eL20">
    <location>
        <begin position="1"/>
        <end position="78"/>
    </location>
</feature>
<reference key="1">
    <citation type="journal article" date="2003" name="Proc. Natl. Acad. Sci. U.S.A.">
        <title>The genome of Nanoarchaeum equitans: insights into early archaeal evolution and derived parasitism.</title>
        <authorList>
            <person name="Waters E."/>
            <person name="Hohn M.J."/>
            <person name="Ahel I."/>
            <person name="Graham D.E."/>
            <person name="Adams M.D."/>
            <person name="Barnstead M."/>
            <person name="Beeson K.Y."/>
            <person name="Bibbs L."/>
            <person name="Bolanos R."/>
            <person name="Keller M."/>
            <person name="Kretz K."/>
            <person name="Lin X."/>
            <person name="Mathur E."/>
            <person name="Ni J."/>
            <person name="Podar M."/>
            <person name="Richardson T."/>
            <person name="Sutton G.G."/>
            <person name="Simon M."/>
            <person name="Soell D."/>
            <person name="Stetter K.O."/>
            <person name="Short J.M."/>
            <person name="Noorderwier M."/>
        </authorList>
    </citation>
    <scope>NUCLEOTIDE SEQUENCE [LARGE SCALE GENOMIC DNA]</scope>
    <source>
        <strain>Kin4-M</strain>
    </source>
</reference>
<protein>
    <recommendedName>
        <fullName evidence="1">Large ribosomal subunit protein eL20</fullName>
    </recommendedName>
    <alternativeName>
        <fullName evidence="2">50S ribosomal protein L18Ae</fullName>
    </alternativeName>
    <alternativeName>
        <fullName evidence="1">50S ribosomal protein L20e</fullName>
    </alternativeName>
    <alternativeName>
        <fullName evidence="1">50S ribosomal protein LX</fullName>
    </alternativeName>
</protein>
<proteinExistence type="inferred from homology"/>
<sequence>MEKKVFVVEGYAKKGSLKFRFKKYFIALKKEDAIFYTYSILGSNHKLKKTQIHIERVYELDPEKDKDKLPDKRLLAFF</sequence>
<gene>
    <name evidence="1" type="primary">rpl18a</name>
    <name evidence="1" type="synonym">rpl20e</name>
    <name evidence="1" type="synonym">rplX</name>
    <name type="ordered locus">NEQ346</name>
</gene>
<name>RL18A_NANEQ</name>
<evidence type="ECO:0000255" key="1">
    <source>
        <dbReference type="HAMAP-Rule" id="MF_00273"/>
    </source>
</evidence>
<evidence type="ECO:0000305" key="2"/>
<keyword id="KW-1185">Reference proteome</keyword>
<keyword id="KW-0687">Ribonucleoprotein</keyword>
<keyword id="KW-0689">Ribosomal protein</keyword>
<keyword id="KW-0694">RNA-binding</keyword>
<keyword id="KW-0699">rRNA-binding</keyword>